<dbReference type="EMBL" id="DQ465575">
    <property type="protein sequence ID" value="ABE76339.1"/>
    <property type="molecule type" value="Genomic_DNA"/>
</dbReference>
<dbReference type="SMR" id="Q1KN12"/>
<dbReference type="GlyCosmos" id="Q1KN12">
    <property type="glycosylation" value="1 site, No reported glycans"/>
</dbReference>
<dbReference type="GO" id="GO:0030424">
    <property type="term" value="C:axon"/>
    <property type="evidence" value="ECO:0007669"/>
    <property type="project" value="TreeGrafter"/>
</dbReference>
<dbReference type="GO" id="GO:0030425">
    <property type="term" value="C:dendrite"/>
    <property type="evidence" value="ECO:0007669"/>
    <property type="project" value="TreeGrafter"/>
</dbReference>
<dbReference type="GO" id="GO:0005615">
    <property type="term" value="C:extracellular space"/>
    <property type="evidence" value="ECO:0007669"/>
    <property type="project" value="TreeGrafter"/>
</dbReference>
<dbReference type="GO" id="GO:0008021">
    <property type="term" value="C:synaptic vesicle"/>
    <property type="evidence" value="ECO:0007669"/>
    <property type="project" value="TreeGrafter"/>
</dbReference>
<dbReference type="GO" id="GO:0008083">
    <property type="term" value="F:growth factor activity"/>
    <property type="evidence" value="ECO:0007669"/>
    <property type="project" value="UniProtKB-KW"/>
</dbReference>
<dbReference type="GO" id="GO:0005163">
    <property type="term" value="F:nerve growth factor receptor binding"/>
    <property type="evidence" value="ECO:0007669"/>
    <property type="project" value="TreeGrafter"/>
</dbReference>
<dbReference type="GO" id="GO:0007169">
    <property type="term" value="P:cell surface receptor protein tyrosine kinase signaling pathway"/>
    <property type="evidence" value="ECO:0007669"/>
    <property type="project" value="TreeGrafter"/>
</dbReference>
<dbReference type="GO" id="GO:0050804">
    <property type="term" value="P:modulation of chemical synaptic transmission"/>
    <property type="evidence" value="ECO:0007669"/>
    <property type="project" value="TreeGrafter"/>
</dbReference>
<dbReference type="GO" id="GO:0043524">
    <property type="term" value="P:negative regulation of neuron apoptotic process"/>
    <property type="evidence" value="ECO:0007669"/>
    <property type="project" value="TreeGrafter"/>
</dbReference>
<dbReference type="GO" id="GO:0021675">
    <property type="term" value="P:nerve development"/>
    <property type="evidence" value="ECO:0007669"/>
    <property type="project" value="TreeGrafter"/>
</dbReference>
<dbReference type="GO" id="GO:0038180">
    <property type="term" value="P:nerve growth factor signaling pathway"/>
    <property type="evidence" value="ECO:0007669"/>
    <property type="project" value="TreeGrafter"/>
</dbReference>
<dbReference type="GO" id="GO:0048812">
    <property type="term" value="P:neuron projection morphogenesis"/>
    <property type="evidence" value="ECO:0007669"/>
    <property type="project" value="TreeGrafter"/>
</dbReference>
<dbReference type="Gene3D" id="2.10.90.10">
    <property type="entry name" value="Cystine-knot cytokines"/>
    <property type="match status" value="1"/>
</dbReference>
<dbReference type="InterPro" id="IPR029034">
    <property type="entry name" value="Cystine-knot_cytokine"/>
</dbReference>
<dbReference type="InterPro" id="IPR020408">
    <property type="entry name" value="Nerve_growth_factor-like"/>
</dbReference>
<dbReference type="InterPro" id="IPR002072">
    <property type="entry name" value="Nerve_growth_factor-rel"/>
</dbReference>
<dbReference type="InterPro" id="IPR015578">
    <property type="entry name" value="Neurotrophin-3"/>
</dbReference>
<dbReference type="InterPro" id="IPR045815">
    <property type="entry name" value="NTF3_N"/>
</dbReference>
<dbReference type="PANTHER" id="PTHR11589">
    <property type="entry name" value="NERVE GROWTH FACTOR NGF -RELATED"/>
    <property type="match status" value="1"/>
</dbReference>
<dbReference type="PANTHER" id="PTHR11589:SF4">
    <property type="entry name" value="NEUROTROPHIN-3"/>
    <property type="match status" value="1"/>
</dbReference>
<dbReference type="Pfam" id="PF00243">
    <property type="entry name" value="NGF"/>
    <property type="match status" value="1"/>
</dbReference>
<dbReference type="Pfam" id="PF19338">
    <property type="entry name" value="NTF3_N"/>
    <property type="match status" value="1"/>
</dbReference>
<dbReference type="PIRSF" id="PIRSF001789">
    <property type="entry name" value="NGF"/>
    <property type="match status" value="1"/>
</dbReference>
<dbReference type="PRINTS" id="PR01914">
    <property type="entry name" value="NEUROTROPHN3"/>
</dbReference>
<dbReference type="SMART" id="SM00140">
    <property type="entry name" value="NGF"/>
    <property type="match status" value="1"/>
</dbReference>
<dbReference type="SUPFAM" id="SSF57501">
    <property type="entry name" value="Cystine-knot cytokines"/>
    <property type="match status" value="1"/>
</dbReference>
<dbReference type="PROSITE" id="PS50270">
    <property type="entry name" value="NGF_2"/>
    <property type="match status" value="1"/>
</dbReference>
<reference key="1">
    <citation type="journal article" date="2006" name="Mol. Phylogenet. Evol.">
        <title>Dispersal and vicariance: the complex evolutionary history of boid snakes.</title>
        <authorList>
            <person name="Noonan B.P."/>
            <person name="Chippindale P.T."/>
        </authorList>
    </citation>
    <scope>NUCLEOTIDE SEQUENCE [GENOMIC DNA]</scope>
</reference>
<gene>
    <name type="primary">NTF3</name>
</gene>
<evidence type="ECO:0000250" key="1"/>
<evidence type="ECO:0000255" key="2"/>
<evidence type="ECO:0000305" key="3"/>
<keyword id="KW-0165">Cleavage on pair of basic residues</keyword>
<keyword id="KW-0325">Glycoprotein</keyword>
<keyword id="KW-0339">Growth factor</keyword>
<keyword id="KW-0964">Secreted</keyword>
<keyword id="KW-0732">Signal</keyword>
<organism>
    <name type="scientific">Eryx johnii</name>
    <name type="common">Indian red sand boa</name>
    <name type="synonym">Boa johnii</name>
    <dbReference type="NCBI Taxonomy" id="51870"/>
    <lineage>
        <taxon>Eukaryota</taxon>
        <taxon>Metazoa</taxon>
        <taxon>Chordata</taxon>
        <taxon>Craniata</taxon>
        <taxon>Vertebrata</taxon>
        <taxon>Euteleostomi</taxon>
        <taxon>Lepidosauria</taxon>
        <taxon>Squamata</taxon>
        <taxon>Bifurcata</taxon>
        <taxon>Unidentata</taxon>
        <taxon>Episquamata</taxon>
        <taxon>Toxicofera</taxon>
        <taxon>Serpentes</taxon>
        <taxon>Henophidia</taxon>
        <taxon>Boidae</taxon>
        <taxon>Erycinae</taxon>
        <taxon>Eryx</taxon>
    </lineage>
</organism>
<name>NTF3_ERYJO</name>
<comment type="function">
    <text evidence="1">Seems to promote the survival of visceral and proprioceptive sensory neurons.</text>
</comment>
<comment type="subcellular location">
    <subcellularLocation>
        <location evidence="1">Secreted</location>
    </subcellularLocation>
</comment>
<comment type="similarity">
    <text evidence="3">Belongs to the NGF-beta family.</text>
</comment>
<proteinExistence type="inferred from homology"/>
<accession>Q1KN12</accession>
<protein>
    <recommendedName>
        <fullName>Neurotrophin-3</fullName>
        <shortName>NT-3</shortName>
    </recommendedName>
</protein>
<sequence>IQSTSMDQGILTEDSMNSFIRTLIQAGIWKNKVPKQTARTKDGTQTTVKKTEAEADAMVSKDTRLSFQPIVSVDAELLRQQRRFSSPRVLLSENTPLEPPPLYLTEEPTVLNRTSRRKREGKSHRGEYSVCDSESRWVTDKSSAVDIRGHQVTVLGEIRMGPS</sequence>
<feature type="signal peptide" evidence="2">
    <location>
        <begin position="1" status="less than"/>
        <end position="3"/>
    </location>
</feature>
<feature type="propeptide" id="PRO_0000346733" evidence="1">
    <location>
        <begin position="4"/>
        <end position="119"/>
    </location>
</feature>
<feature type="chain" id="PRO_0000346734" description="Neurotrophin-3">
    <location>
        <begin position="120"/>
        <end position="163" status="greater than"/>
    </location>
</feature>
<feature type="glycosylation site" description="N-linked (GlcNAc...) asparagine" evidence="2">
    <location>
        <position position="112"/>
    </location>
</feature>
<feature type="non-terminal residue">
    <location>
        <position position="1"/>
    </location>
</feature>
<feature type="non-terminal residue">
    <location>
        <position position="163"/>
    </location>
</feature>